<accession>Q2LY33</accession>
<evidence type="ECO:0000255" key="1">
    <source>
        <dbReference type="HAMAP-Rule" id="MF_01398"/>
    </source>
</evidence>
<organism>
    <name type="scientific">Syntrophus aciditrophicus (strain SB)</name>
    <dbReference type="NCBI Taxonomy" id="56780"/>
    <lineage>
        <taxon>Bacteria</taxon>
        <taxon>Pseudomonadati</taxon>
        <taxon>Thermodesulfobacteriota</taxon>
        <taxon>Syntrophia</taxon>
        <taxon>Syntrophales</taxon>
        <taxon>Syntrophaceae</taxon>
        <taxon>Syntrophus</taxon>
    </lineage>
</organism>
<reference key="1">
    <citation type="journal article" date="2007" name="Proc. Natl. Acad. Sci. U.S.A.">
        <title>The genome of Syntrophus aciditrophicus: life at the thermodynamic limit of microbial growth.</title>
        <authorList>
            <person name="McInerney M.J."/>
            <person name="Rohlin L."/>
            <person name="Mouttaki H."/>
            <person name="Kim U."/>
            <person name="Krupp R.S."/>
            <person name="Rios-Hernandez L."/>
            <person name="Sieber J."/>
            <person name="Struchtemeyer C.G."/>
            <person name="Bhattacharyya A."/>
            <person name="Campbell J.W."/>
            <person name="Gunsalus R.P."/>
        </authorList>
    </citation>
    <scope>NUCLEOTIDE SEQUENCE [LARGE SCALE GENOMIC DNA]</scope>
    <source>
        <strain>SB</strain>
    </source>
</reference>
<proteinExistence type="inferred from homology"/>
<comment type="function">
    <text evidence="1">F(1)F(0) ATP synthase produces ATP from ADP in the presence of a proton or sodium gradient. F-type ATPases consist of two structural domains, F(1) containing the extramembraneous catalytic core and F(0) containing the membrane proton channel, linked together by a central stalk and a peripheral stalk. During catalysis, ATP synthesis in the catalytic domain of F(1) is coupled via a rotary mechanism of the central stalk subunits to proton translocation.</text>
</comment>
<comment type="function">
    <text evidence="1">Component of the F(0) channel, it forms part of the peripheral stalk, linking F(1) to F(0).</text>
</comment>
<comment type="subunit">
    <text evidence="1">F-type ATPases have 2 components, F(1) - the catalytic core - and F(0) - the membrane proton channel. F(1) has five subunits: alpha(3), beta(3), gamma(1), delta(1), epsilon(1). F(0) has three main subunits: a(1), b(2) and c(10-14). The alpha and beta chains form an alternating ring which encloses part of the gamma chain. F(1) is attached to F(0) by a central stalk formed by the gamma and epsilon chains, while a peripheral stalk is formed by the delta and b chains.</text>
</comment>
<comment type="subcellular location">
    <subcellularLocation>
        <location evidence="1">Cell inner membrane</location>
        <topology evidence="1">Single-pass membrane protein</topology>
    </subcellularLocation>
</comment>
<comment type="similarity">
    <text evidence="1">Belongs to the ATPase B chain family.</text>
</comment>
<gene>
    <name evidence="1" type="primary">atpF2</name>
    <name type="ordered locus">SYNAS_31170</name>
    <name type="ORF">SYN_02103</name>
</gene>
<dbReference type="EMBL" id="CP000252">
    <property type="protein sequence ID" value="ABC78996.1"/>
    <property type="molecule type" value="Genomic_DNA"/>
</dbReference>
<dbReference type="RefSeq" id="WP_011419010.1">
    <property type="nucleotide sequence ID" value="NC_007759.1"/>
</dbReference>
<dbReference type="SMR" id="Q2LY33"/>
<dbReference type="STRING" id="56780.SYN_02103"/>
<dbReference type="KEGG" id="sat:SYN_02103"/>
<dbReference type="eggNOG" id="COG0711">
    <property type="taxonomic scope" value="Bacteria"/>
</dbReference>
<dbReference type="HOGENOM" id="CLU_070737_0_0_7"/>
<dbReference type="InParanoid" id="Q2LY33"/>
<dbReference type="OrthoDB" id="466272at2"/>
<dbReference type="Proteomes" id="UP000001933">
    <property type="component" value="Chromosome"/>
</dbReference>
<dbReference type="GO" id="GO:0005886">
    <property type="term" value="C:plasma membrane"/>
    <property type="evidence" value="ECO:0007669"/>
    <property type="project" value="UniProtKB-SubCell"/>
</dbReference>
<dbReference type="GO" id="GO:0045259">
    <property type="term" value="C:proton-transporting ATP synthase complex"/>
    <property type="evidence" value="ECO:0007669"/>
    <property type="project" value="UniProtKB-KW"/>
</dbReference>
<dbReference type="GO" id="GO:0046933">
    <property type="term" value="F:proton-transporting ATP synthase activity, rotational mechanism"/>
    <property type="evidence" value="ECO:0007669"/>
    <property type="project" value="UniProtKB-UniRule"/>
</dbReference>
<dbReference type="GO" id="GO:0046961">
    <property type="term" value="F:proton-transporting ATPase activity, rotational mechanism"/>
    <property type="evidence" value="ECO:0007669"/>
    <property type="project" value="TreeGrafter"/>
</dbReference>
<dbReference type="CDD" id="cd06503">
    <property type="entry name" value="ATP-synt_Fo_b"/>
    <property type="match status" value="1"/>
</dbReference>
<dbReference type="HAMAP" id="MF_01398">
    <property type="entry name" value="ATP_synth_b_bprime"/>
    <property type="match status" value="1"/>
</dbReference>
<dbReference type="InterPro" id="IPR017707">
    <property type="entry name" value="Alt_ATP_synth_F0_bsu"/>
</dbReference>
<dbReference type="InterPro" id="IPR002146">
    <property type="entry name" value="ATP_synth_b/b'su_bac/chlpt"/>
</dbReference>
<dbReference type="InterPro" id="IPR050059">
    <property type="entry name" value="ATP_synthase_B_chain"/>
</dbReference>
<dbReference type="NCBIfam" id="TIGR03321">
    <property type="entry name" value="alt_F1F0_F0_B"/>
    <property type="match status" value="1"/>
</dbReference>
<dbReference type="PANTHER" id="PTHR33445">
    <property type="entry name" value="ATP SYNTHASE SUBUNIT B', CHLOROPLASTIC"/>
    <property type="match status" value="1"/>
</dbReference>
<dbReference type="PANTHER" id="PTHR33445:SF2">
    <property type="entry name" value="ATP SYNTHASE SUBUNIT B', CHLOROPLASTIC"/>
    <property type="match status" value="1"/>
</dbReference>
<dbReference type="Pfam" id="PF00430">
    <property type="entry name" value="ATP-synt_B"/>
    <property type="match status" value="1"/>
</dbReference>
<keyword id="KW-0066">ATP synthesis</keyword>
<keyword id="KW-0997">Cell inner membrane</keyword>
<keyword id="KW-1003">Cell membrane</keyword>
<keyword id="KW-0138">CF(0)</keyword>
<keyword id="KW-0375">Hydrogen ion transport</keyword>
<keyword id="KW-0406">Ion transport</keyword>
<keyword id="KW-0472">Membrane</keyword>
<keyword id="KW-1185">Reference proteome</keyword>
<keyword id="KW-0812">Transmembrane</keyword>
<keyword id="KW-1133">Transmembrane helix</keyword>
<keyword id="KW-0813">Transport</keyword>
<feature type="chain" id="PRO_0000368836" description="ATP synthase subunit b 2">
    <location>
        <begin position="1"/>
        <end position="274"/>
    </location>
</feature>
<feature type="transmembrane region" description="Helical" evidence="1">
    <location>
        <begin position="2"/>
        <end position="22"/>
    </location>
</feature>
<protein>
    <recommendedName>
        <fullName evidence="1">ATP synthase subunit b 2</fullName>
    </recommendedName>
    <alternativeName>
        <fullName evidence="1">ATP synthase F(0) sector subunit b 2</fullName>
    </alternativeName>
    <alternativeName>
        <fullName evidence="1">ATPase subunit I 2</fullName>
    </alternativeName>
    <alternativeName>
        <fullName evidence="1">F-type ATPase subunit b 2</fullName>
        <shortName evidence="1">F-ATPase subunit b 2</shortName>
    </alternativeName>
</protein>
<sequence>MHIDWFVLLAQLVNFLILIYLLKRFLYTRIIQAMNEREAKIAARFDEAERLKREAEEAARVYEEKNSFLQGQEEKMLNQAREVVNHRQKEWMDSAREEVDAIRRRWIETVLQEKAAFLEHLRQRTGKQVFAIARKILDDLADTAIESKMVDVLIDRIHSLDPAEREKICSALEDSEEGAIVQSAFALFPEDRQRLTDTVRDLLGKPDAVIRYQESSDLIGGIEFLASGHRIAWSISDYLEHLEQDFDRVLHEEVRQTLPKPSGESVMPSEEQRP</sequence>
<name>ATPF2_SYNAS</name>